<comment type="function">
    <text evidence="2">The C-terminal purine nucleoside phosphorylase (PNP) domain cleaves the N-glycosidic bond of ATP, and to a lesser extent dATP, to release adenine and a sugar triphosphate; has weak activity on ADP and AMP and no activity on dADP, dAMP, adenosine, deoxyadenosine or other (d)NTPs (PubMed:37595565).</text>
</comment>
<comment type="catalytic activity">
    <reaction evidence="2">
        <text>ATP + H2O = D-ribose 5-triphosphate + adenine</text>
        <dbReference type="Rhea" id="RHEA:44164"/>
        <dbReference type="ChEBI" id="CHEBI:15377"/>
        <dbReference type="ChEBI" id="CHEBI:16708"/>
        <dbReference type="ChEBI" id="CHEBI:30616"/>
        <dbReference type="ChEBI" id="CHEBI:91013"/>
    </reaction>
    <physiologicalReaction direction="left-to-right" evidence="2">
        <dbReference type="Rhea" id="RHEA:44165"/>
    </physiologicalReaction>
</comment>
<comment type="catalytic activity">
    <reaction evidence="2">
        <text>dATP + H2O = 2-deoxyribose 5-triphosphate + adenine</text>
        <dbReference type="Rhea" id="RHEA:77215"/>
        <dbReference type="ChEBI" id="CHEBI:15377"/>
        <dbReference type="ChEBI" id="CHEBI:16708"/>
        <dbReference type="ChEBI" id="CHEBI:61404"/>
        <dbReference type="ChEBI" id="CHEBI:72943"/>
    </reaction>
    <physiologicalReaction direction="left-to-right" evidence="2">
        <dbReference type="Rhea" id="RHEA:77216"/>
    </physiologicalReaction>
</comment>
<comment type="domain">
    <text evidence="2">Has 2 domains, an N-terminal death domain and a C-terminal purine nucleoside phosphorylase (PNP) domain; the PNP domain has ATP nucleosidase activity. Expression of the C-terminal domain alone leads to cell death in E.coli (PubMed:37595565).</text>
</comment>
<organism>
    <name type="scientific">Amphimedon queenslandica</name>
    <name type="common">Sponge</name>
    <dbReference type="NCBI Taxonomy" id="400682"/>
    <lineage>
        <taxon>Eukaryota</taxon>
        <taxon>Metazoa</taxon>
        <taxon>Porifera</taxon>
        <taxon>Demospongiae</taxon>
        <taxon>Heteroscleromorpha</taxon>
        <taxon>Haplosclerida</taxon>
        <taxon>Niphatidae</taxon>
        <taxon>Amphimedon</taxon>
    </lineage>
</organism>
<name>DDAN_AMPQE</name>
<accession>A0A1X7TVA9</accession>
<keyword id="KW-0378">Hydrolase</keyword>
<keyword id="KW-1185">Reference proteome</keyword>
<feature type="chain" id="PRO_0000459346" description="Death domain-containing ATP nucleosidase">
    <location>
        <begin position="1"/>
        <end position="533"/>
    </location>
</feature>
<feature type="region of interest" description="Death domain" evidence="4">
    <location>
        <begin position="1"/>
        <end position="262"/>
    </location>
</feature>
<feature type="region of interest" description="Disordered" evidence="1">
    <location>
        <begin position="184"/>
        <end position="248"/>
    </location>
</feature>
<feature type="region of interest" description="Purine nucleoside phosphorylase domain" evidence="4">
    <location>
        <begin position="263"/>
        <end position="533"/>
    </location>
</feature>
<feature type="compositionally biased region" description="Polar residues" evidence="1">
    <location>
        <begin position="218"/>
        <end position="227"/>
    </location>
</feature>
<feature type="compositionally biased region" description="Low complexity" evidence="1">
    <location>
        <begin position="236"/>
        <end position="248"/>
    </location>
</feature>
<feature type="mutagenesis site" description="Loss of (d)ATPase hydrolysis (in isolated PNP domain)." evidence="2">
    <original>D</original>
    <variation>A</variation>
    <location>
        <position position="497"/>
    </location>
</feature>
<sequence length="533" mass="58354">MDAAAIISLLNSTSDRVDQFHVEVYRLSLYGAGIRGMEEETSLFNLFNSLNTSTGDLQLSVSFTVHVLKKFGFTGLAELTRYASPDFNMASSYPKADLLLTVTSFLYDLHPVRERSNALTFISSVYLNGYNYRSVTMPQFVKVMFDKGVIMIGDVSALDSLIKQYRPSFFNEYMERSKLTNTNSTFVSDDATQDNTAPAPTIPDDRATGTVAAEKGQPSAQVNQPPTTGGGNCTVSGSTQTSTNSFNSTNTVTAAGKEEKVSDDVTKGIKFLLMTATDPELKGVLERLKPLDGRDEVIEQFKNGVDLYIGKYGKHPVVVGQSAHTKGQQGSLPAEKVTNKIMEIFKPKYIIAIGVCFGMDGKEVNLGDVIVSDRIADLYNIRVEPGCIKARITDADKAGDTLVSLFRNPRNDIVSVIGKSRRFNMVKPSFDKENAKEVKVHCGPMVSTPALVDDAEFKEKLSKARPDALAGEMEGAGIFLAAKDHKVEAIVIKAVGDLADGKKIEYKDWKPFACQAAAEYVLHHLDDDRTIHM</sequence>
<gene>
    <name type="primary">109585858</name>
</gene>
<protein>
    <recommendedName>
        <fullName evidence="3">Death domain-containing ATP nucleosidase</fullName>
        <shortName evidence="3">DDAN</shortName>
        <ecNumber evidence="2">3.5.99.-</ecNumber>
    </recommendedName>
</protein>
<evidence type="ECO:0000256" key="1">
    <source>
        <dbReference type="SAM" id="MobiDB-lite"/>
    </source>
</evidence>
<evidence type="ECO:0000269" key="2">
    <source>
    </source>
</evidence>
<evidence type="ECO:0000303" key="3">
    <source ref="2"/>
</evidence>
<evidence type="ECO:0000305" key="4">
    <source ref="2"/>
</evidence>
<evidence type="ECO:0000312" key="5">
    <source>
        <dbReference type="Proteomes" id="UP000007879"/>
    </source>
</evidence>
<reference evidence="5" key="1">
    <citation type="journal article" date="2010" name="Nature">
        <title>The Amphimedon queenslandica genome and the evolution of animal complexity.</title>
        <authorList>
            <person name="Srivastava M."/>
            <person name="Simakov O."/>
            <person name="Chapman J."/>
            <person name="Fahey B."/>
            <person name="Gauthier M.E."/>
            <person name="Mitros T."/>
            <person name="Richards G.S."/>
            <person name="Conaco C."/>
            <person name="Dacre M."/>
            <person name="Hellsten U."/>
            <person name="Larroux C."/>
            <person name="Putnam N.H."/>
            <person name="Stanke M."/>
            <person name="Adamska M."/>
            <person name="Darling A."/>
            <person name="Degnan S.M."/>
            <person name="Oakley T.H."/>
            <person name="Plachetzki D.C."/>
            <person name="Zhai Y."/>
            <person name="Adamski M."/>
            <person name="Calcino A."/>
            <person name="Cummins S.F."/>
            <person name="Goodstein D.M."/>
            <person name="Harris C."/>
            <person name="Jackson D.J."/>
            <person name="Leys S.P."/>
            <person name="Shu S."/>
            <person name="Woodcroft B.J."/>
            <person name="Vervoort M."/>
            <person name="Kosik K.S."/>
            <person name="Manning G."/>
            <person name="Degnan B.M."/>
            <person name="Rokhsar D.S."/>
        </authorList>
    </citation>
    <scope>NUCLEOTIDE SEQUENCE [LARGE SCALE GENOMIC DNA]</scope>
</reference>
<reference key="2">
    <citation type="submission" date="2017-05" db="UniProtKB">
        <authorList>
            <consortium name="EnsemblMetazoa"/>
        </authorList>
    </citation>
    <scope>IDENTIFICATION</scope>
</reference>
<reference key="3">
    <citation type="journal article" date="2023" name="Cell">
        <title>A conserved family of immune effectors cleaves cellular ATP upon viral infection.</title>
        <authorList>
            <person name="Rousset F."/>
            <person name="Yirmiya E."/>
            <person name="Nesher S."/>
            <person name="Brandis A."/>
            <person name="Mehlman T."/>
            <person name="Itkin M."/>
            <person name="Malitsky S."/>
            <person name="Millman A."/>
            <person name="Melamed S."/>
            <person name="Sorek R."/>
        </authorList>
    </citation>
    <scope>FUNCTION</scope>
    <scope>CATALYTIC ACTIVITY</scope>
    <scope>DOMAIN</scope>
    <scope>MUTAGENESIS OF ASP-497</scope>
</reference>
<dbReference type="EC" id="3.5.99.-" evidence="2"/>
<dbReference type="SMR" id="A0A1X7TVA9"/>
<dbReference type="EnsemblMetazoa" id="XM_020002007.1">
    <property type="protein sequence ID" value="XP_019857566.1"/>
    <property type="gene ID" value="LOC109585858"/>
</dbReference>
<dbReference type="KEGG" id="aqu:109585858"/>
<dbReference type="eggNOG" id="ENOG502T344">
    <property type="taxonomic scope" value="Eukaryota"/>
</dbReference>
<dbReference type="InParanoid" id="A0A1X7TVA9"/>
<dbReference type="OrthoDB" id="1658288at2759"/>
<dbReference type="Proteomes" id="UP000007879">
    <property type="component" value="Unassembled WGS sequence"/>
</dbReference>
<dbReference type="GO" id="GO:0005829">
    <property type="term" value="C:cytosol"/>
    <property type="evidence" value="ECO:0007669"/>
    <property type="project" value="TreeGrafter"/>
</dbReference>
<dbReference type="GO" id="GO:0008782">
    <property type="term" value="F:adenosylhomocysteine nucleosidase activity"/>
    <property type="evidence" value="ECO:0007669"/>
    <property type="project" value="TreeGrafter"/>
</dbReference>
<dbReference type="GO" id="GO:0008930">
    <property type="term" value="F:methylthioadenosine nucleosidase activity"/>
    <property type="evidence" value="ECO:0007669"/>
    <property type="project" value="TreeGrafter"/>
</dbReference>
<dbReference type="GO" id="GO:0019284">
    <property type="term" value="P:L-methionine salvage from S-adenosylmethionine"/>
    <property type="evidence" value="ECO:0007669"/>
    <property type="project" value="TreeGrafter"/>
</dbReference>
<dbReference type="GO" id="GO:0009116">
    <property type="term" value="P:nucleoside metabolic process"/>
    <property type="evidence" value="ECO:0007669"/>
    <property type="project" value="InterPro"/>
</dbReference>
<dbReference type="Gene3D" id="3.40.50.1580">
    <property type="entry name" value="Nucleoside phosphorylase domain"/>
    <property type="match status" value="1"/>
</dbReference>
<dbReference type="InterPro" id="IPR000845">
    <property type="entry name" value="Nucleoside_phosphorylase_d"/>
</dbReference>
<dbReference type="InterPro" id="IPR035994">
    <property type="entry name" value="Nucleoside_phosphorylase_sf"/>
</dbReference>
<dbReference type="PANTHER" id="PTHR46832">
    <property type="entry name" value="5'-METHYLTHIOADENOSINE/S-ADENOSYLHOMOCYSTEINE NUCLEOSIDASE"/>
    <property type="match status" value="1"/>
</dbReference>
<dbReference type="PANTHER" id="PTHR46832:SF1">
    <property type="entry name" value="5'-METHYLTHIOADENOSINE_S-ADENOSYLHOMOCYSTEINE NUCLEOSIDASE"/>
    <property type="match status" value="1"/>
</dbReference>
<dbReference type="Pfam" id="PF01048">
    <property type="entry name" value="PNP_UDP_1"/>
    <property type="match status" value="1"/>
</dbReference>
<dbReference type="SUPFAM" id="SSF53167">
    <property type="entry name" value="Purine and uridine phosphorylases"/>
    <property type="match status" value="1"/>
</dbReference>
<proteinExistence type="evidence at protein level"/>